<comment type="subcellular location">
    <subcellularLocation>
        <location evidence="2">Secreted</location>
    </subcellularLocation>
</comment>
<comment type="similarity">
    <text evidence="8">Belongs to the peptidase S8 family.</text>
</comment>
<comment type="sequence caution" evidence="8">
    <conflict type="erroneous gene model prediction">
        <sequence resource="EMBL-CDS" id="AAG51763"/>
    </conflict>
</comment>
<sequence length="759" mass="81492">MELSSLIVPNNKKHFVVVFIGLVLIFKIALITAANEKSQIYTVHLGERQHDDPNIVTESHHDILGPLLGSKKASHESMIYSYRHGFSGFAAKLTSSQARELSGHPDVVRVTRSKNMKLKTTRVSDYLGLTSAAPTGLLHETDMGSEAIVGILDSGIWPDSKSFNDNGLGPIPTRWKGKCVSAEAFNASSCNRKLIGAMYYSKGLESKYNGSFNAAEKGEVMSPLDKIGHGTHCASTAVGSFVPDANVLSLAQGTARGSAPRARIASYKVCWNNEECFTPDIVKAIDHAIRDGVDVLSLSLGSEVPVDFEVDRDDFAIAAFHAVMKGIPVVCAGGNDGPEKETISNVAPWLITVAATTMDREYFTPITLGNNITLLGQEGLYIGEEVGFTDLLFYDDVTREDMEAGKATGKILLFFQRANFEDDFAAYAKSKGAVGVIIATQPTDSIDASTVDIAIAYVDNELGMDILLYIQTTKSPIAKISPTKTFVGRPLATKVARFSSRGPNSLSPVILKPDIAAPGSGILAAVPTGGGYDFMSGTSMSTPVVSGIVALLRKKRPDWSPAAIRSALVTTALQTDPSGEPIAAEGSPRKLADPFDYGGGLVNPVKVADPGLVYDMGHDEYVHYLCSAGYDNTSISKLLGEIYTCPTPIPSMLDVNMPSITIPYLSEEITITRTVTNVGPVGSVYKAVIQAPQGINLQVSPETLEFGSNTNKTTFTVKVSTTHRANTDYLFGSLTWADNEGHNVRIPLSVRTRVFNFKI</sequence>
<name>SBT3G_ARATH</name>
<feature type="signal peptide" evidence="3">
    <location>
        <begin position="1"/>
        <end position="33"/>
    </location>
</feature>
<feature type="propeptide" id="PRO_0000435216" description="Activation peptide" evidence="1">
    <location>
        <begin position="34"/>
        <end position="119"/>
    </location>
</feature>
<feature type="chain" id="PRO_0000435217" description="Subtilisin-like protease SBT3.16">
    <location>
        <begin position="120"/>
        <end status="unknown"/>
    </location>
</feature>
<feature type="propeptide" id="PRO_0000435218" evidence="1">
    <location>
        <begin status="unknown"/>
        <end position="759"/>
    </location>
</feature>
<feature type="domain" description="Inhibitor I9" evidence="3">
    <location>
        <begin position="41"/>
        <end position="118"/>
    </location>
</feature>
<feature type="domain" description="Peptidase S8" evidence="5">
    <location>
        <begin position="124"/>
        <end position="608"/>
    </location>
</feature>
<feature type="active site" description="Charge relay system" evidence="5">
    <location>
        <position position="153"/>
    </location>
</feature>
<feature type="active site" description="Charge relay system" evidence="5">
    <location>
        <position position="229"/>
    </location>
</feature>
<feature type="active site" description="Charge relay system" evidence="5">
    <location>
        <position position="539"/>
    </location>
</feature>
<feature type="glycosylation site" description="N-linked (GlcNAc...) asparagine" evidence="4">
    <location>
        <position position="186"/>
    </location>
</feature>
<feature type="glycosylation site" description="N-linked (GlcNAc...) asparagine" evidence="4">
    <location>
        <position position="209"/>
    </location>
</feature>
<feature type="glycosylation site" description="N-linked (GlcNAc...) asparagine" evidence="4">
    <location>
        <position position="371"/>
    </location>
</feature>
<feature type="glycosylation site" description="N-linked (GlcNAc...) asparagine" evidence="4">
    <location>
        <position position="632"/>
    </location>
</feature>
<feature type="glycosylation site" description="N-linked (GlcNAc...) asparagine" evidence="4">
    <location>
        <position position="711"/>
    </location>
</feature>
<dbReference type="EC" id="3.4.21.-" evidence="6"/>
<dbReference type="EMBL" id="AC066691">
    <property type="protein sequence ID" value="AAG51763.1"/>
    <property type="status" value="ALT_SEQ"/>
    <property type="molecule type" value="Genomic_DNA"/>
</dbReference>
<dbReference type="EMBL" id="CP002684">
    <property type="protein sequence ID" value="AEE34477.1"/>
    <property type="molecule type" value="Genomic_DNA"/>
</dbReference>
<dbReference type="EMBL" id="AK118565">
    <property type="protein sequence ID" value="BAC43166.1"/>
    <property type="molecule type" value="mRNA"/>
</dbReference>
<dbReference type="EMBL" id="BT005956">
    <property type="protein sequence ID" value="AAO64891.1"/>
    <property type="molecule type" value="mRNA"/>
</dbReference>
<dbReference type="PIR" id="A96687">
    <property type="entry name" value="A96687"/>
</dbReference>
<dbReference type="RefSeq" id="NP_564868.2">
    <property type="nucleotide sequence ID" value="NM_105292.3"/>
</dbReference>
<dbReference type="SMR" id="Q8GWX9"/>
<dbReference type="MEROPS" id="S08.A34"/>
<dbReference type="GlyCosmos" id="Q8GWX9">
    <property type="glycosylation" value="5 sites, No reported glycans"/>
</dbReference>
<dbReference type="GlyGen" id="Q8GWX9">
    <property type="glycosylation" value="5 sites"/>
</dbReference>
<dbReference type="iPTMnet" id="Q8GWX9"/>
<dbReference type="PaxDb" id="3702-AT1G66210.1"/>
<dbReference type="ProteomicsDB" id="232907"/>
<dbReference type="EnsemblPlants" id="AT1G66210.1">
    <property type="protein sequence ID" value="AT1G66210.1"/>
    <property type="gene ID" value="AT1G66210"/>
</dbReference>
<dbReference type="GeneID" id="842936"/>
<dbReference type="Gramene" id="AT1G66210.1">
    <property type="protein sequence ID" value="AT1G66210.1"/>
    <property type="gene ID" value="AT1G66210"/>
</dbReference>
<dbReference type="KEGG" id="ath:AT1G66210"/>
<dbReference type="Araport" id="AT1G66210"/>
<dbReference type="TAIR" id="AT1G66210"/>
<dbReference type="eggNOG" id="ENOG502QSF0">
    <property type="taxonomic scope" value="Eukaryota"/>
</dbReference>
<dbReference type="HOGENOM" id="CLU_000625_4_2_1"/>
<dbReference type="InParanoid" id="Q8GWX9"/>
<dbReference type="OMA" id="HDGSSHW"/>
<dbReference type="PhylomeDB" id="Q8GWX9"/>
<dbReference type="PRO" id="PR:Q8GWX9"/>
<dbReference type="Proteomes" id="UP000006548">
    <property type="component" value="Chromosome 1"/>
</dbReference>
<dbReference type="ExpressionAtlas" id="Q8GWX9">
    <property type="expression patterns" value="baseline and differential"/>
</dbReference>
<dbReference type="GO" id="GO:0005576">
    <property type="term" value="C:extracellular region"/>
    <property type="evidence" value="ECO:0007669"/>
    <property type="project" value="UniProtKB-SubCell"/>
</dbReference>
<dbReference type="GO" id="GO:0004252">
    <property type="term" value="F:serine-type endopeptidase activity"/>
    <property type="evidence" value="ECO:0007669"/>
    <property type="project" value="InterPro"/>
</dbReference>
<dbReference type="GO" id="GO:0006508">
    <property type="term" value="P:proteolysis"/>
    <property type="evidence" value="ECO:0007669"/>
    <property type="project" value="UniProtKB-KW"/>
</dbReference>
<dbReference type="CDD" id="cd02120">
    <property type="entry name" value="PA_subtilisin_like"/>
    <property type="match status" value="1"/>
</dbReference>
<dbReference type="CDD" id="cd04852">
    <property type="entry name" value="Peptidases_S8_3"/>
    <property type="match status" value="1"/>
</dbReference>
<dbReference type="FunFam" id="2.60.40.2310:FF:000001">
    <property type="entry name" value="Subtilisin-like protease SBT1.5"/>
    <property type="match status" value="1"/>
</dbReference>
<dbReference type="FunFam" id="3.40.50.200:FF:000006">
    <property type="entry name" value="Subtilisin-like protease SBT1.5"/>
    <property type="match status" value="1"/>
</dbReference>
<dbReference type="FunFam" id="3.30.70.80:FF:000002">
    <property type="entry name" value="Subtilisin-like protease SBT5.3"/>
    <property type="match status" value="1"/>
</dbReference>
<dbReference type="Gene3D" id="2.60.40.2310">
    <property type="match status" value="1"/>
</dbReference>
<dbReference type="Gene3D" id="3.50.30.30">
    <property type="match status" value="1"/>
</dbReference>
<dbReference type="Gene3D" id="3.30.70.80">
    <property type="entry name" value="Peptidase S8 propeptide/proteinase inhibitor I9"/>
    <property type="match status" value="1"/>
</dbReference>
<dbReference type="Gene3D" id="3.40.50.200">
    <property type="entry name" value="Peptidase S8/S53 domain"/>
    <property type="match status" value="1"/>
</dbReference>
<dbReference type="InterPro" id="IPR000209">
    <property type="entry name" value="Peptidase_S8/S53_dom"/>
</dbReference>
<dbReference type="InterPro" id="IPR036852">
    <property type="entry name" value="Peptidase_S8/S53_dom_sf"/>
</dbReference>
<dbReference type="InterPro" id="IPR022398">
    <property type="entry name" value="Peptidase_S8_His-AS"/>
</dbReference>
<dbReference type="InterPro" id="IPR023828">
    <property type="entry name" value="Peptidase_S8_Ser-AS"/>
</dbReference>
<dbReference type="InterPro" id="IPR015500">
    <property type="entry name" value="Peptidase_S8_subtilisin-rel"/>
</dbReference>
<dbReference type="InterPro" id="IPR034197">
    <property type="entry name" value="Peptidases_S8_3"/>
</dbReference>
<dbReference type="InterPro" id="IPR010259">
    <property type="entry name" value="S8pro/Inhibitor_I9"/>
</dbReference>
<dbReference type="InterPro" id="IPR037045">
    <property type="entry name" value="S8pro/Inhibitor_I9_sf"/>
</dbReference>
<dbReference type="InterPro" id="IPR045051">
    <property type="entry name" value="SBT"/>
</dbReference>
<dbReference type="InterPro" id="IPR041469">
    <property type="entry name" value="Subtilisin-like_FN3"/>
</dbReference>
<dbReference type="PANTHER" id="PTHR10795">
    <property type="entry name" value="PROPROTEIN CONVERTASE SUBTILISIN/KEXIN"/>
    <property type="match status" value="1"/>
</dbReference>
<dbReference type="Pfam" id="PF17766">
    <property type="entry name" value="fn3_6"/>
    <property type="match status" value="1"/>
</dbReference>
<dbReference type="Pfam" id="PF05922">
    <property type="entry name" value="Inhibitor_I9"/>
    <property type="match status" value="1"/>
</dbReference>
<dbReference type="Pfam" id="PF00082">
    <property type="entry name" value="Peptidase_S8"/>
    <property type="match status" value="1"/>
</dbReference>
<dbReference type="PRINTS" id="PR00723">
    <property type="entry name" value="SUBTILISIN"/>
</dbReference>
<dbReference type="SUPFAM" id="SSF52743">
    <property type="entry name" value="Subtilisin-like"/>
    <property type="match status" value="1"/>
</dbReference>
<dbReference type="PROSITE" id="PS51892">
    <property type="entry name" value="SUBTILASE"/>
    <property type="match status" value="1"/>
</dbReference>
<dbReference type="PROSITE" id="PS00136">
    <property type="entry name" value="SUBTILASE_ASP"/>
    <property type="match status" value="1"/>
</dbReference>
<dbReference type="PROSITE" id="PS00137">
    <property type="entry name" value="SUBTILASE_HIS"/>
    <property type="match status" value="1"/>
</dbReference>
<dbReference type="PROSITE" id="PS00138">
    <property type="entry name" value="SUBTILASE_SER"/>
    <property type="match status" value="1"/>
</dbReference>
<accession>Q8GWX9</accession>
<accession>Q9C7U9</accession>
<keyword id="KW-0068">Autocatalytic cleavage</keyword>
<keyword id="KW-0325">Glycoprotein</keyword>
<keyword id="KW-0378">Hydrolase</keyword>
<keyword id="KW-0645">Protease</keyword>
<keyword id="KW-1185">Reference proteome</keyword>
<keyword id="KW-0964">Secreted</keyword>
<keyword id="KW-0720">Serine protease</keyword>
<keyword id="KW-0732">Signal</keyword>
<keyword id="KW-0865">Zymogen</keyword>
<organism evidence="11">
    <name type="scientific">Arabidopsis thaliana</name>
    <name type="common">Mouse-ear cress</name>
    <dbReference type="NCBI Taxonomy" id="3702"/>
    <lineage>
        <taxon>Eukaryota</taxon>
        <taxon>Viridiplantae</taxon>
        <taxon>Streptophyta</taxon>
        <taxon>Embryophyta</taxon>
        <taxon>Tracheophyta</taxon>
        <taxon>Spermatophyta</taxon>
        <taxon>Magnoliopsida</taxon>
        <taxon>eudicotyledons</taxon>
        <taxon>Gunneridae</taxon>
        <taxon>Pentapetalae</taxon>
        <taxon>rosids</taxon>
        <taxon>malvids</taxon>
        <taxon>Brassicales</taxon>
        <taxon>Brassicaceae</taxon>
        <taxon>Camelineae</taxon>
        <taxon>Arabidopsis</taxon>
    </lineage>
</organism>
<evidence type="ECO:0000250" key="1">
    <source>
        <dbReference type="UniProtKB" id="Q39547"/>
    </source>
</evidence>
<evidence type="ECO:0000250" key="2">
    <source>
        <dbReference type="UniProtKB" id="Q84WS0"/>
    </source>
</evidence>
<evidence type="ECO:0000255" key="3"/>
<evidence type="ECO:0000255" key="4">
    <source>
        <dbReference type="PROSITE-ProRule" id="PRU00498"/>
    </source>
</evidence>
<evidence type="ECO:0000255" key="5">
    <source>
        <dbReference type="PROSITE-ProRule" id="PRU01240"/>
    </source>
</evidence>
<evidence type="ECO:0000255" key="6">
    <source>
        <dbReference type="PROSITE-ProRule" id="PRU10082"/>
    </source>
</evidence>
<evidence type="ECO:0000303" key="7">
    <source>
    </source>
</evidence>
<evidence type="ECO:0000305" key="8"/>
<evidence type="ECO:0000312" key="9">
    <source>
        <dbReference type="Araport" id="AT1G66210"/>
    </source>
</evidence>
<evidence type="ECO:0000312" key="10">
    <source>
        <dbReference type="EMBL" id="AAG51763.1"/>
    </source>
</evidence>
<evidence type="ECO:0000312" key="11">
    <source>
        <dbReference type="EMBL" id="BAC43166.1"/>
    </source>
</evidence>
<reference key="1">
    <citation type="journal article" date="2000" name="Nature">
        <title>Sequence and analysis of chromosome 1 of the plant Arabidopsis thaliana.</title>
        <authorList>
            <person name="Theologis A."/>
            <person name="Ecker J.R."/>
            <person name="Palm C.J."/>
            <person name="Federspiel N.A."/>
            <person name="Kaul S."/>
            <person name="White O."/>
            <person name="Alonso J."/>
            <person name="Altafi H."/>
            <person name="Araujo R."/>
            <person name="Bowman C.L."/>
            <person name="Brooks S.Y."/>
            <person name="Buehler E."/>
            <person name="Chan A."/>
            <person name="Chao Q."/>
            <person name="Chen H."/>
            <person name="Cheuk R.F."/>
            <person name="Chin C.W."/>
            <person name="Chung M.K."/>
            <person name="Conn L."/>
            <person name="Conway A.B."/>
            <person name="Conway A.R."/>
            <person name="Creasy T.H."/>
            <person name="Dewar K."/>
            <person name="Dunn P."/>
            <person name="Etgu P."/>
            <person name="Feldblyum T.V."/>
            <person name="Feng J.-D."/>
            <person name="Fong B."/>
            <person name="Fujii C.Y."/>
            <person name="Gill J.E."/>
            <person name="Goldsmith A.D."/>
            <person name="Haas B."/>
            <person name="Hansen N.F."/>
            <person name="Hughes B."/>
            <person name="Huizar L."/>
            <person name="Hunter J.L."/>
            <person name="Jenkins J."/>
            <person name="Johnson-Hopson C."/>
            <person name="Khan S."/>
            <person name="Khaykin E."/>
            <person name="Kim C.J."/>
            <person name="Koo H.L."/>
            <person name="Kremenetskaia I."/>
            <person name="Kurtz D.B."/>
            <person name="Kwan A."/>
            <person name="Lam B."/>
            <person name="Langin-Hooper S."/>
            <person name="Lee A."/>
            <person name="Lee J.M."/>
            <person name="Lenz C.A."/>
            <person name="Li J.H."/>
            <person name="Li Y.-P."/>
            <person name="Lin X."/>
            <person name="Liu S.X."/>
            <person name="Liu Z.A."/>
            <person name="Luros J.S."/>
            <person name="Maiti R."/>
            <person name="Marziali A."/>
            <person name="Militscher J."/>
            <person name="Miranda M."/>
            <person name="Nguyen M."/>
            <person name="Nierman W.C."/>
            <person name="Osborne B.I."/>
            <person name="Pai G."/>
            <person name="Peterson J."/>
            <person name="Pham P.K."/>
            <person name="Rizzo M."/>
            <person name="Rooney T."/>
            <person name="Rowley D."/>
            <person name="Sakano H."/>
            <person name="Salzberg S.L."/>
            <person name="Schwartz J.R."/>
            <person name="Shinn P."/>
            <person name="Southwick A.M."/>
            <person name="Sun H."/>
            <person name="Tallon L.J."/>
            <person name="Tambunga G."/>
            <person name="Toriumi M.J."/>
            <person name="Town C.D."/>
            <person name="Utterback T."/>
            <person name="Van Aken S."/>
            <person name="Vaysberg M."/>
            <person name="Vysotskaia V.S."/>
            <person name="Walker M."/>
            <person name="Wu D."/>
            <person name="Yu G."/>
            <person name="Fraser C.M."/>
            <person name="Venter J.C."/>
            <person name="Davis R.W."/>
        </authorList>
    </citation>
    <scope>NUCLEOTIDE SEQUENCE [LARGE SCALE GENOMIC DNA]</scope>
    <source>
        <strain>cv. Columbia</strain>
    </source>
</reference>
<reference key="2">
    <citation type="journal article" date="2017" name="Plant J.">
        <title>Araport11: a complete reannotation of the Arabidopsis thaliana reference genome.</title>
        <authorList>
            <person name="Cheng C.Y."/>
            <person name="Krishnakumar V."/>
            <person name="Chan A.P."/>
            <person name="Thibaud-Nissen F."/>
            <person name="Schobel S."/>
            <person name="Town C.D."/>
        </authorList>
    </citation>
    <scope>GENOME REANNOTATION</scope>
    <source>
        <strain>cv. Columbia</strain>
    </source>
</reference>
<reference key="3">
    <citation type="journal article" date="2002" name="Science">
        <title>Functional annotation of a full-length Arabidopsis cDNA collection.</title>
        <authorList>
            <person name="Seki M."/>
            <person name="Narusaka M."/>
            <person name="Kamiya A."/>
            <person name="Ishida J."/>
            <person name="Satou M."/>
            <person name="Sakurai T."/>
            <person name="Nakajima M."/>
            <person name="Enju A."/>
            <person name="Akiyama K."/>
            <person name="Oono Y."/>
            <person name="Muramatsu M."/>
            <person name="Hayashizaki Y."/>
            <person name="Kawai J."/>
            <person name="Carninci P."/>
            <person name="Itoh M."/>
            <person name="Ishii Y."/>
            <person name="Arakawa T."/>
            <person name="Shibata K."/>
            <person name="Shinagawa A."/>
            <person name="Shinozaki K."/>
        </authorList>
    </citation>
    <scope>NUCLEOTIDE SEQUENCE [LARGE SCALE MRNA]</scope>
    <source>
        <strain>cv. Columbia</strain>
    </source>
</reference>
<reference key="4">
    <citation type="journal article" date="2003" name="Science">
        <title>Empirical analysis of transcriptional activity in the Arabidopsis genome.</title>
        <authorList>
            <person name="Yamada K."/>
            <person name="Lim J."/>
            <person name="Dale J.M."/>
            <person name="Chen H."/>
            <person name="Shinn P."/>
            <person name="Palm C.J."/>
            <person name="Southwick A.M."/>
            <person name="Wu H.C."/>
            <person name="Kim C.J."/>
            <person name="Nguyen M."/>
            <person name="Pham P.K."/>
            <person name="Cheuk R.F."/>
            <person name="Karlin-Newmann G."/>
            <person name="Liu S.X."/>
            <person name="Lam B."/>
            <person name="Sakano H."/>
            <person name="Wu T."/>
            <person name="Yu G."/>
            <person name="Miranda M."/>
            <person name="Quach H.L."/>
            <person name="Tripp M."/>
            <person name="Chang C.H."/>
            <person name="Lee J.M."/>
            <person name="Toriumi M.J."/>
            <person name="Chan M.M."/>
            <person name="Tang C.C."/>
            <person name="Onodera C.S."/>
            <person name="Deng J.M."/>
            <person name="Akiyama K."/>
            <person name="Ansari Y."/>
            <person name="Arakawa T."/>
            <person name="Banh J."/>
            <person name="Banno F."/>
            <person name="Bowser L."/>
            <person name="Brooks S.Y."/>
            <person name="Carninci P."/>
            <person name="Chao Q."/>
            <person name="Choy N."/>
            <person name="Enju A."/>
            <person name="Goldsmith A.D."/>
            <person name="Gurjal M."/>
            <person name="Hansen N.F."/>
            <person name="Hayashizaki Y."/>
            <person name="Johnson-Hopson C."/>
            <person name="Hsuan V.W."/>
            <person name="Iida K."/>
            <person name="Karnes M."/>
            <person name="Khan S."/>
            <person name="Koesema E."/>
            <person name="Ishida J."/>
            <person name="Jiang P.X."/>
            <person name="Jones T."/>
            <person name="Kawai J."/>
            <person name="Kamiya A."/>
            <person name="Meyers C."/>
            <person name="Nakajima M."/>
            <person name="Narusaka M."/>
            <person name="Seki M."/>
            <person name="Sakurai T."/>
            <person name="Satou M."/>
            <person name="Tamse R."/>
            <person name="Vaysberg M."/>
            <person name="Wallender E.K."/>
            <person name="Wong C."/>
            <person name="Yamamura Y."/>
            <person name="Yuan S."/>
            <person name="Shinozaki K."/>
            <person name="Davis R.W."/>
            <person name="Theologis A."/>
            <person name="Ecker J.R."/>
        </authorList>
    </citation>
    <scope>NUCLEOTIDE SEQUENCE [LARGE SCALE MRNA]</scope>
    <source>
        <strain>cv. Columbia</strain>
    </source>
</reference>
<reference key="5">
    <citation type="journal article" date="2005" name="PLoS Comput. Biol.">
        <title>Inferring hypotheses on functional relationships of genes: Analysis of the Arabidopsis thaliana subtilase gene family.</title>
        <authorList>
            <person name="Rautengarten C."/>
            <person name="Steinhauser D."/>
            <person name="Bussis D."/>
            <person name="Stintzi A."/>
            <person name="Schaller A."/>
            <person name="Kopka J."/>
            <person name="Altmann T."/>
        </authorList>
    </citation>
    <scope>GENE FAMILY</scope>
    <scope>NOMENCLATURE</scope>
</reference>
<gene>
    <name evidence="7" type="primary">SBT3.16</name>
    <name evidence="9" type="ordered locus">At1g66210</name>
    <name evidence="10" type="ORF">T6J19.3</name>
</gene>
<protein>
    <recommendedName>
        <fullName evidence="7">Subtilisin-like protease SBT3.16</fullName>
        <ecNumber evidence="6">3.4.21.-</ecNumber>
    </recommendedName>
    <alternativeName>
        <fullName evidence="7">Subtilase subfamily 3 member 16</fullName>
        <shortName evidence="7">AtSBT3.16</shortName>
    </alternativeName>
</protein>
<proteinExistence type="evidence at transcript level"/>